<protein>
    <recommendedName>
        <fullName>4-deoxy-L-threo-5-hexosulose-uronate ketol-isomerase</fullName>
        <ecNumber>5.3.1.17</ecNumber>
    </recommendedName>
    <alternativeName>
        <fullName>5-keto-4-deoxyuronate isomerase</fullName>
    </alternativeName>
    <alternativeName>
        <fullName>DKI isomerase</fullName>
    </alternativeName>
</protein>
<proteinExistence type="evidence at protein level"/>
<organism>
    <name type="scientific">Dickeya dadantii (strain 3937)</name>
    <name type="common">Erwinia chrysanthemi (strain 3937)</name>
    <dbReference type="NCBI Taxonomy" id="198628"/>
    <lineage>
        <taxon>Bacteria</taxon>
        <taxon>Pseudomonadati</taxon>
        <taxon>Pseudomonadota</taxon>
        <taxon>Gammaproteobacteria</taxon>
        <taxon>Enterobacterales</taxon>
        <taxon>Pectobacteriaceae</taxon>
        <taxon>Dickeya</taxon>
    </lineage>
</organism>
<name>KDUI_DICD3</name>
<reference key="1">
    <citation type="journal article" date="1991" name="Mol. Microbiol.">
        <title>Analysis of an Erwinia chrysanthemi gene cluster involved in pectin degradation.</title>
        <authorList>
            <person name="Condemine G."/>
            <person name="Robert-Baudouy J."/>
        </authorList>
    </citation>
    <scope>NUCLEOTIDE SEQUENCE [GENOMIC DNA]</scope>
    <scope>FUNCTION IN PECTIN DEGRADATION</scope>
    <scope>DISRUPTION PHENOTYPE</scope>
    <scope>INDUCTION</scope>
    <source>
        <strain>3937</strain>
    </source>
</reference>
<reference key="2">
    <citation type="journal article" date="2011" name="J. Bacteriol.">
        <title>Genome sequence of the plant-pathogenic bacterium Dickeya dadantii 3937.</title>
        <authorList>
            <person name="Glasner J.D."/>
            <person name="Yang C.H."/>
            <person name="Reverchon S."/>
            <person name="Hugouvieux-Cotte-Pattat N."/>
            <person name="Condemine G."/>
            <person name="Bohin J.P."/>
            <person name="Van Gijsegem F."/>
            <person name="Yang S."/>
            <person name="Franza T."/>
            <person name="Expert D."/>
            <person name="Plunkett G. III"/>
            <person name="San Francisco M.J."/>
            <person name="Charkowski A.O."/>
            <person name="Py B."/>
            <person name="Bell K."/>
            <person name="Rauscher L."/>
            <person name="Rodriguez-Palenzuela P."/>
            <person name="Toussaint A."/>
            <person name="Holeva M.C."/>
            <person name="He S.Y."/>
            <person name="Douet V."/>
            <person name="Boccara M."/>
            <person name="Blanco C."/>
            <person name="Toth I."/>
            <person name="Anderson B.D."/>
            <person name="Biehl B.S."/>
            <person name="Mau B."/>
            <person name="Flynn S.M."/>
            <person name="Barras F."/>
            <person name="Lindeberg M."/>
            <person name="Birch P.R."/>
            <person name="Tsuyumu S."/>
            <person name="Shi X."/>
            <person name="Hibbing M."/>
            <person name="Yap M.N."/>
            <person name="Carpentier M."/>
            <person name="Dassa E."/>
            <person name="Umehara M."/>
            <person name="Kim J.F."/>
            <person name="Rusch M."/>
            <person name="Soni P."/>
            <person name="Mayhew G.F."/>
            <person name="Fouts D.E."/>
            <person name="Gill S.R."/>
            <person name="Blattner F.R."/>
            <person name="Keen N.T."/>
            <person name="Perna N.T."/>
        </authorList>
    </citation>
    <scope>NUCLEOTIDE SEQUENCE [LARGE SCALE GENOMIC DNA]</scope>
    <source>
        <strain>3937</strain>
    </source>
</reference>
<gene>
    <name type="primary">kduI</name>
    <name type="ordered locus">Dda3937_03727</name>
</gene>
<dbReference type="EC" id="5.3.1.17"/>
<dbReference type="EMBL" id="X62073">
    <property type="protein sequence ID" value="CAA43988.1"/>
    <property type="molecule type" value="Genomic_DNA"/>
</dbReference>
<dbReference type="EMBL" id="CP002038">
    <property type="protein sequence ID" value="ADM98615.1"/>
    <property type="molecule type" value="Genomic_DNA"/>
</dbReference>
<dbReference type="PIR" id="S17710">
    <property type="entry name" value="S17710"/>
</dbReference>
<dbReference type="RefSeq" id="WP_013318065.1">
    <property type="nucleotide sequence ID" value="NC_014500.1"/>
</dbReference>
<dbReference type="SMR" id="Q05529"/>
<dbReference type="STRING" id="198628.Dda3937_03727"/>
<dbReference type="KEGG" id="ddd:Dda3937_03727"/>
<dbReference type="PATRIC" id="fig|198628.6.peg.2392"/>
<dbReference type="eggNOG" id="COG3717">
    <property type="taxonomic scope" value="Bacteria"/>
</dbReference>
<dbReference type="HOGENOM" id="CLU_062609_0_0_6"/>
<dbReference type="OrthoDB" id="9770644at2"/>
<dbReference type="BioCyc" id="MetaCyc:MONOMER-17020"/>
<dbReference type="UniPathway" id="UPA00545">
    <property type="reaction ID" value="UER00826"/>
</dbReference>
<dbReference type="Proteomes" id="UP000006859">
    <property type="component" value="Chromosome"/>
</dbReference>
<dbReference type="GO" id="GO:0008697">
    <property type="term" value="F:4-deoxy-L-threo-5-hexosulose-uronate ketol-isomerase activity"/>
    <property type="evidence" value="ECO:0007669"/>
    <property type="project" value="UniProtKB-UniRule"/>
</dbReference>
<dbReference type="GO" id="GO:0008270">
    <property type="term" value="F:zinc ion binding"/>
    <property type="evidence" value="ECO:0007669"/>
    <property type="project" value="UniProtKB-UniRule"/>
</dbReference>
<dbReference type="GO" id="GO:0019698">
    <property type="term" value="P:D-galacturonate catabolic process"/>
    <property type="evidence" value="ECO:0007669"/>
    <property type="project" value="TreeGrafter"/>
</dbReference>
<dbReference type="GO" id="GO:0042840">
    <property type="term" value="P:D-glucuronate catabolic process"/>
    <property type="evidence" value="ECO:0007669"/>
    <property type="project" value="TreeGrafter"/>
</dbReference>
<dbReference type="GO" id="GO:0045490">
    <property type="term" value="P:pectin catabolic process"/>
    <property type="evidence" value="ECO:0007669"/>
    <property type="project" value="UniProtKB-UniRule"/>
</dbReference>
<dbReference type="CDD" id="cd20491">
    <property type="entry name" value="cupin_KduI_C"/>
    <property type="match status" value="1"/>
</dbReference>
<dbReference type="CDD" id="cd20294">
    <property type="entry name" value="cupin_KduI_N"/>
    <property type="match status" value="1"/>
</dbReference>
<dbReference type="FunFam" id="2.60.120.10:FF:000018">
    <property type="entry name" value="4-deoxy-L-threo-5-hexosulose-uronate ketol-isomerase"/>
    <property type="match status" value="1"/>
</dbReference>
<dbReference type="FunFam" id="2.60.120.520:FF:000001">
    <property type="entry name" value="4-deoxy-L-threo-5-hexosulose-uronate ketol-isomerase"/>
    <property type="match status" value="1"/>
</dbReference>
<dbReference type="Gene3D" id="2.60.120.10">
    <property type="entry name" value="Jelly Rolls"/>
    <property type="match status" value="1"/>
</dbReference>
<dbReference type="Gene3D" id="2.60.120.520">
    <property type="entry name" value="pectin degrading enzyme 5-keto 4- deoxyuronate isomerase, domain 1"/>
    <property type="match status" value="1"/>
</dbReference>
<dbReference type="HAMAP" id="MF_00687">
    <property type="entry name" value="KduI"/>
    <property type="match status" value="1"/>
</dbReference>
<dbReference type="InterPro" id="IPR007045">
    <property type="entry name" value="KduI"/>
</dbReference>
<dbReference type="InterPro" id="IPR021120">
    <property type="entry name" value="KduI/IolB_isomerase"/>
</dbReference>
<dbReference type="InterPro" id="IPR027449">
    <property type="entry name" value="KduI_N"/>
</dbReference>
<dbReference type="InterPro" id="IPR014710">
    <property type="entry name" value="RmlC-like_jellyroll"/>
</dbReference>
<dbReference type="InterPro" id="IPR011051">
    <property type="entry name" value="RmlC_Cupin_sf"/>
</dbReference>
<dbReference type="NCBIfam" id="NF002091">
    <property type="entry name" value="PRK00924.1"/>
    <property type="match status" value="1"/>
</dbReference>
<dbReference type="PANTHER" id="PTHR38461">
    <property type="entry name" value="4-DEOXY-L-THREO-5-HEXOSULOSE-URONATE KETOL-ISOMERASE"/>
    <property type="match status" value="1"/>
</dbReference>
<dbReference type="PANTHER" id="PTHR38461:SF1">
    <property type="entry name" value="4-DEOXY-L-THREO-5-HEXOSULOSE-URONATE KETOL-ISOMERASE"/>
    <property type="match status" value="1"/>
</dbReference>
<dbReference type="Pfam" id="PF04962">
    <property type="entry name" value="KduI"/>
    <property type="match status" value="1"/>
</dbReference>
<dbReference type="PIRSF" id="PIRSF006625">
    <property type="entry name" value="KduI"/>
    <property type="match status" value="1"/>
</dbReference>
<dbReference type="SUPFAM" id="SSF51182">
    <property type="entry name" value="RmlC-like cupins"/>
    <property type="match status" value="1"/>
</dbReference>
<evidence type="ECO:0000250" key="1"/>
<evidence type="ECO:0000269" key="2">
    <source>
    </source>
</evidence>
<evidence type="ECO:0000305" key="3"/>
<evidence type="ECO:0000305" key="4">
    <source>
    </source>
</evidence>
<comment type="function">
    <text evidence="4">Catalyzes the isomerization of 5-dehydro-4-deoxy-D-glucuronate to 3-deoxy-D-glycero-2,5-hexodiulosonate.</text>
</comment>
<comment type="catalytic activity">
    <reaction>
        <text>5-dehydro-4-deoxy-D-glucuronate = 3-deoxy-D-glycero-2,5-hexodiulosonate</text>
        <dbReference type="Rhea" id="RHEA:23896"/>
        <dbReference type="ChEBI" id="CHEBI:17117"/>
        <dbReference type="ChEBI" id="CHEBI:29071"/>
        <dbReference type="EC" id="5.3.1.17"/>
    </reaction>
</comment>
<comment type="cofactor">
    <cofactor evidence="1">
        <name>Zn(2+)</name>
        <dbReference type="ChEBI" id="CHEBI:29105"/>
    </cofactor>
    <text evidence="1">Binds 1 zinc ion per subunit.</text>
</comment>
<comment type="pathway">
    <text>Glycan metabolism; pectin degradation; 2-dehydro-3-deoxy-D-gluconate from pectin: step 4/5.</text>
</comment>
<comment type="induction">
    <text evidence="2">Induced by galacturonate and at a higher level by polygalacturonate. Is expressed under the control of KdgR, but is not controlled by PecS. Is repressed by glucose.</text>
</comment>
<comment type="disruption phenotype">
    <text evidence="2">Cells lacking this gene are unable to grow on polygalacturonate (PGA) or digalacturonate, but can grow on galacturonate.</text>
</comment>
<comment type="similarity">
    <text evidence="3">Belongs to the KduI family.</text>
</comment>
<sequence>MQVRQSIHSDHARQLDTAGLRREFLIEHIFDADACTMTYSHIDRIIVGGVMPVHQAVTVGEDVGKQLGVSYFLERRELGAINIGGAGVVSVDGERYAIGHEEAIYIGKGARDIRFTSVDPAKPARFYYNSAPAHTTFPTRKITAAEASPQTIGDDATSNRRTINKYIVPDVLPTCQLTMGLTKLAEGNLWNTMPCHTHERRMEVYFYFDMDEETAVFHMMGQPQETRHILVHNEQAVISPSWSIHSGVGTKRYTFIWGMVGENQVFSDMDHVKVSELR</sequence>
<keyword id="KW-0413">Isomerase</keyword>
<keyword id="KW-0479">Metal-binding</keyword>
<keyword id="KW-1185">Reference proteome</keyword>
<keyword id="KW-0862">Zinc</keyword>
<accession>Q05529</accession>
<accession>E0SDC3</accession>
<feature type="chain" id="PRO_0000215491" description="4-deoxy-L-threo-5-hexosulose-uronate ketol-isomerase">
    <location>
        <begin position="1"/>
        <end position="278"/>
    </location>
</feature>
<feature type="binding site" evidence="1">
    <location>
        <position position="196"/>
    </location>
    <ligand>
        <name>Zn(2+)</name>
        <dbReference type="ChEBI" id="CHEBI:29105"/>
    </ligand>
</feature>
<feature type="binding site" evidence="1">
    <location>
        <position position="198"/>
    </location>
    <ligand>
        <name>Zn(2+)</name>
        <dbReference type="ChEBI" id="CHEBI:29105"/>
    </ligand>
</feature>
<feature type="binding site" evidence="1">
    <location>
        <position position="203"/>
    </location>
    <ligand>
        <name>Zn(2+)</name>
        <dbReference type="ChEBI" id="CHEBI:29105"/>
    </ligand>
</feature>
<feature type="binding site" evidence="1">
    <location>
        <position position="245"/>
    </location>
    <ligand>
        <name>Zn(2+)</name>
        <dbReference type="ChEBI" id="CHEBI:29105"/>
    </ligand>
</feature>
<feature type="sequence conflict" description="In Ref. 1; CAA43988." evidence="3" ref="1">
    <original>V</original>
    <variation>D</variation>
    <location>
        <position position="63"/>
    </location>
</feature>
<feature type="sequence conflict" description="In Ref. 1; CAA43988." evidence="3" ref="1">
    <original>S</original>
    <variation>T</variation>
    <location>
        <position position="70"/>
    </location>
</feature>